<proteinExistence type="evidence at transcript level"/>
<organism>
    <name type="scientific">Cerastes vipera</name>
    <name type="common">Sahara sand viper</name>
    <dbReference type="NCBI Taxonomy" id="8698"/>
    <lineage>
        <taxon>Eukaryota</taxon>
        <taxon>Metazoa</taxon>
        <taxon>Chordata</taxon>
        <taxon>Craniata</taxon>
        <taxon>Vertebrata</taxon>
        <taxon>Euteleostomi</taxon>
        <taxon>Lepidosauria</taxon>
        <taxon>Squamata</taxon>
        <taxon>Bifurcata</taxon>
        <taxon>Unidentata</taxon>
        <taxon>Episquamata</taxon>
        <taxon>Toxicofera</taxon>
        <taxon>Serpentes</taxon>
        <taxon>Colubroidea</taxon>
        <taxon>Viperidae</taxon>
        <taxon>Viperinae</taxon>
        <taxon>Cerastes</taxon>
    </lineage>
</organism>
<keyword id="KW-1217">Cell adhesion impairing toxin</keyword>
<keyword id="KW-1015">Disulfide bond</keyword>
<keyword id="KW-1199">Hemostasis impairing toxin</keyword>
<keyword id="KW-1201">Platelet aggregation inhibiting toxin</keyword>
<keyword id="KW-0964">Secreted</keyword>
<keyword id="KW-0732">Signal</keyword>
<keyword id="KW-0800">Toxin</keyword>
<name>DIDA_CERVI</name>
<feature type="signal peptide" evidence="2">
    <location>
        <begin position="1"/>
        <end position="20"/>
    </location>
</feature>
<feature type="propeptide" id="PRO_0000318184" evidence="1">
    <location>
        <begin position="21"/>
        <end position="46"/>
    </location>
</feature>
<feature type="chain" id="PRO_5000076854" description="Disintegrin CV-11-alpha">
    <location>
        <begin position="47"/>
        <end position="111"/>
    </location>
</feature>
<feature type="domain" description="Disintegrin" evidence="3">
    <location>
        <begin position="47"/>
        <end position="111"/>
    </location>
</feature>
<feature type="short sequence motif" description="Cell attachment site">
    <location>
        <begin position="89"/>
        <end position="91"/>
    </location>
</feature>
<feature type="disulfide bond" evidence="3">
    <location>
        <begin position="53"/>
        <end position="76"/>
    </location>
</feature>
<feature type="disulfide bond" description="Interchain (with C-7 in beta subunit)" evidence="3">
    <location>
        <position position="54"/>
    </location>
</feature>
<feature type="disulfide bond" description="Interchain (with C-12 in beta subunit)" evidence="3">
    <location>
        <position position="59"/>
    </location>
</feature>
<feature type="disulfide bond" evidence="3">
    <location>
        <begin position="67"/>
        <end position="73"/>
    </location>
</feature>
<feature type="disulfide bond" evidence="3">
    <location>
        <begin position="72"/>
        <end position="97"/>
    </location>
</feature>
<feature type="disulfide bond" evidence="3">
    <location>
        <begin position="85"/>
        <end position="104"/>
    </location>
</feature>
<comment type="function">
    <text evidence="1">Inhibits ADP-induced human platelet aggregation. Antagonist of alpha-IIb/beta-3 (ITGA2B/ITGB3) (By similarity).</text>
</comment>
<comment type="subunit">
    <text evidence="1">Heterodimer with subunit beta; disulfide-linked.</text>
</comment>
<comment type="subcellular location">
    <subcellularLocation>
        <location evidence="1">Secreted</location>
    </subcellularLocation>
</comment>
<comment type="tissue specificity">
    <text>Expressed by the venom gland.</text>
</comment>
<comment type="similarity">
    <text evidence="4">Belongs to the disintegrin family. Dimeric disintegrin subfamily.</text>
</comment>
<reference key="1">
    <citation type="journal article" date="2006" name="Biochem. J.">
        <title>Molecular cloning of disintegrins from Cerastes vipera and Macrovipera lebetina transmediterranea venom gland cDNA libraries: insight into the evolution of the snake venom integrin-inhibition system.</title>
        <authorList>
            <person name="Sanz L."/>
            <person name="Bazaa A."/>
            <person name="Marrakchi N."/>
            <person name="Perez A."/>
            <person name="Chenik M."/>
            <person name="Bel Lasfer Z."/>
            <person name="El Ayeb M."/>
            <person name="Calvete J.J."/>
        </authorList>
    </citation>
    <scope>NUCLEOTIDE SEQUENCE [MRNA]</scope>
    <source>
        <tissue>Venom gland</tissue>
    </source>
</reference>
<accession>Q3BK16</accession>
<evidence type="ECO:0000250" key="1"/>
<evidence type="ECO:0000255" key="2"/>
<evidence type="ECO:0000255" key="3">
    <source>
        <dbReference type="PROSITE-ProRule" id="PRU00068"/>
    </source>
</evidence>
<evidence type="ECO:0000305" key="4"/>
<sequence>MIQVLLVIICLAVFPYQGSSIILESGNVNDFELVYPKKVTVLPTGAMNSAHPCCDPVTCKPKRGEHCISGPCCRNCKFLSPGTICKKAKGDDMNDYCTGISSDCPRNPWKD</sequence>
<dbReference type="EMBL" id="AM114013">
    <property type="protein sequence ID" value="CAJ34937.1"/>
    <property type="molecule type" value="mRNA"/>
</dbReference>
<dbReference type="SMR" id="Q3BK16"/>
<dbReference type="GO" id="GO:0005576">
    <property type="term" value="C:extracellular region"/>
    <property type="evidence" value="ECO:0007669"/>
    <property type="project" value="UniProtKB-SubCell"/>
</dbReference>
<dbReference type="GO" id="GO:0090729">
    <property type="term" value="F:toxin activity"/>
    <property type="evidence" value="ECO:0007669"/>
    <property type="project" value="UniProtKB-KW"/>
</dbReference>
<dbReference type="Gene3D" id="4.10.70.10">
    <property type="entry name" value="Disintegrin domain"/>
    <property type="match status" value="1"/>
</dbReference>
<dbReference type="InterPro" id="IPR018358">
    <property type="entry name" value="Disintegrin_CS"/>
</dbReference>
<dbReference type="InterPro" id="IPR001762">
    <property type="entry name" value="Disintegrin_dom"/>
</dbReference>
<dbReference type="InterPro" id="IPR036436">
    <property type="entry name" value="Disintegrin_dom_sf"/>
</dbReference>
<dbReference type="PANTHER" id="PTHR11905">
    <property type="entry name" value="ADAM A DISINTEGRIN AND METALLOPROTEASE DOMAIN"/>
    <property type="match status" value="1"/>
</dbReference>
<dbReference type="PANTHER" id="PTHR11905:SF159">
    <property type="entry name" value="ADAM METALLOPROTEASE"/>
    <property type="match status" value="1"/>
</dbReference>
<dbReference type="Pfam" id="PF00200">
    <property type="entry name" value="Disintegrin"/>
    <property type="match status" value="1"/>
</dbReference>
<dbReference type="PRINTS" id="PR00289">
    <property type="entry name" value="DISINTEGRIN"/>
</dbReference>
<dbReference type="SMART" id="SM00050">
    <property type="entry name" value="DISIN"/>
    <property type="match status" value="1"/>
</dbReference>
<dbReference type="SUPFAM" id="SSF57552">
    <property type="entry name" value="Blood coagulation inhibitor (disintegrin)"/>
    <property type="match status" value="1"/>
</dbReference>
<dbReference type="PROSITE" id="PS00427">
    <property type="entry name" value="DISINTEGRIN_1"/>
    <property type="match status" value="1"/>
</dbReference>
<dbReference type="PROSITE" id="PS50214">
    <property type="entry name" value="DISINTEGRIN_2"/>
    <property type="match status" value="1"/>
</dbReference>
<protein>
    <recommendedName>
        <fullName>Disintegrin CV-11-alpha</fullName>
        <shortName>CV11</shortName>
    </recommendedName>
</protein>